<evidence type="ECO:0000255" key="1">
    <source>
        <dbReference type="HAMAP-Rule" id="MF_00023"/>
    </source>
</evidence>
<dbReference type="EMBL" id="AM408590">
    <property type="protein sequence ID" value="CAL73114.1"/>
    <property type="molecule type" value="Genomic_DNA"/>
</dbReference>
<dbReference type="RefSeq" id="WP_003416113.1">
    <property type="nucleotide sequence ID" value="NC_008769.1"/>
</dbReference>
<dbReference type="SMR" id="A1KN98"/>
<dbReference type="GeneID" id="45427099"/>
<dbReference type="KEGG" id="mbb:BCG_3125c"/>
<dbReference type="HOGENOM" id="CLU_108953_2_1_11"/>
<dbReference type="Proteomes" id="UP000001472">
    <property type="component" value="Chromosome"/>
</dbReference>
<dbReference type="GO" id="GO:0005829">
    <property type="term" value="C:cytosol"/>
    <property type="evidence" value="ECO:0007669"/>
    <property type="project" value="TreeGrafter"/>
</dbReference>
<dbReference type="GO" id="GO:0003723">
    <property type="term" value="F:RNA binding"/>
    <property type="evidence" value="ECO:0007669"/>
    <property type="project" value="UniProtKB-UniRule"/>
</dbReference>
<dbReference type="GO" id="GO:0070929">
    <property type="term" value="P:trans-translation"/>
    <property type="evidence" value="ECO:0007669"/>
    <property type="project" value="UniProtKB-UniRule"/>
</dbReference>
<dbReference type="CDD" id="cd09294">
    <property type="entry name" value="SmpB"/>
    <property type="match status" value="1"/>
</dbReference>
<dbReference type="Gene3D" id="2.40.280.10">
    <property type="match status" value="1"/>
</dbReference>
<dbReference type="HAMAP" id="MF_00023">
    <property type="entry name" value="SmpB"/>
    <property type="match status" value="1"/>
</dbReference>
<dbReference type="InterPro" id="IPR023620">
    <property type="entry name" value="SmpB"/>
</dbReference>
<dbReference type="InterPro" id="IPR000037">
    <property type="entry name" value="SsrA-bd_prot"/>
</dbReference>
<dbReference type="InterPro" id="IPR020081">
    <property type="entry name" value="SsrA-bd_prot_CS"/>
</dbReference>
<dbReference type="NCBIfam" id="NF003843">
    <property type="entry name" value="PRK05422.1"/>
    <property type="match status" value="1"/>
</dbReference>
<dbReference type="NCBIfam" id="TIGR00086">
    <property type="entry name" value="smpB"/>
    <property type="match status" value="1"/>
</dbReference>
<dbReference type="PANTHER" id="PTHR30308:SF2">
    <property type="entry name" value="SSRA-BINDING PROTEIN"/>
    <property type="match status" value="1"/>
</dbReference>
<dbReference type="PANTHER" id="PTHR30308">
    <property type="entry name" value="TMRNA-BINDING COMPONENT OF TRANS-TRANSLATION TAGGING COMPLEX"/>
    <property type="match status" value="1"/>
</dbReference>
<dbReference type="Pfam" id="PF01668">
    <property type="entry name" value="SmpB"/>
    <property type="match status" value="1"/>
</dbReference>
<dbReference type="SUPFAM" id="SSF74982">
    <property type="entry name" value="Small protein B (SmpB)"/>
    <property type="match status" value="1"/>
</dbReference>
<dbReference type="PROSITE" id="PS01317">
    <property type="entry name" value="SSRP"/>
    <property type="match status" value="1"/>
</dbReference>
<accession>A1KN98</accession>
<sequence>MSKSSRGGRQIVASNRKARHNYSIIEVFEAGVALQGTEVKSLREGQASLADSFATIDDGEVWLRNAHIPEYRHGSWTNHEPRRNRKLLLHRRQIDTLVGKIREGNFALVPLSLYFAEGKVKVELALARGKQARDKRQDMARRDAQREVLRELGRRAKGMT</sequence>
<comment type="function">
    <text evidence="1">Required for rescue of stalled ribosomes mediated by trans-translation. Binds to transfer-messenger RNA (tmRNA), required for stable association of tmRNA with ribosomes. tmRNA and SmpB together mimic tRNA shape, replacing the anticodon stem-loop with SmpB. tmRNA is encoded by the ssrA gene; the 2 termini fold to resemble tRNA(Ala) and it encodes a 'tag peptide', a short internal open reading frame. During trans-translation Ala-aminoacylated tmRNA acts like a tRNA, entering the A-site of stalled ribosomes, displacing the stalled mRNA. The ribosome then switches to translate the ORF on the tmRNA; the nascent peptide is terminated with the 'tag peptide' encoded by the tmRNA and targeted for degradation. The ribosome is freed to recommence translation, which seems to be the essential function of trans-translation.</text>
</comment>
<comment type="subcellular location">
    <subcellularLocation>
        <location evidence="1">Cytoplasm</location>
    </subcellularLocation>
    <text evidence="1">The tmRNA-SmpB complex associates with stalled 70S ribosomes.</text>
</comment>
<comment type="similarity">
    <text evidence="1">Belongs to the SmpB family.</text>
</comment>
<keyword id="KW-0963">Cytoplasm</keyword>
<keyword id="KW-0694">RNA-binding</keyword>
<organism>
    <name type="scientific">Mycobacterium bovis (strain BCG / Pasteur 1173P2)</name>
    <dbReference type="NCBI Taxonomy" id="410289"/>
    <lineage>
        <taxon>Bacteria</taxon>
        <taxon>Bacillati</taxon>
        <taxon>Actinomycetota</taxon>
        <taxon>Actinomycetes</taxon>
        <taxon>Mycobacteriales</taxon>
        <taxon>Mycobacteriaceae</taxon>
        <taxon>Mycobacterium</taxon>
        <taxon>Mycobacterium tuberculosis complex</taxon>
    </lineage>
</organism>
<reference key="1">
    <citation type="journal article" date="2007" name="Proc. Natl. Acad. Sci. U.S.A.">
        <title>Genome plasticity of BCG and impact on vaccine efficacy.</title>
        <authorList>
            <person name="Brosch R."/>
            <person name="Gordon S.V."/>
            <person name="Garnier T."/>
            <person name="Eiglmeier K."/>
            <person name="Frigui W."/>
            <person name="Valenti P."/>
            <person name="Dos Santos S."/>
            <person name="Duthoy S."/>
            <person name="Lacroix C."/>
            <person name="Garcia-Pelayo C."/>
            <person name="Inwald J.K."/>
            <person name="Golby P."/>
            <person name="Garcia J.N."/>
            <person name="Hewinson R.G."/>
            <person name="Behr M.A."/>
            <person name="Quail M.A."/>
            <person name="Churcher C."/>
            <person name="Barrell B.G."/>
            <person name="Parkhill J."/>
            <person name="Cole S.T."/>
        </authorList>
    </citation>
    <scope>NUCLEOTIDE SEQUENCE [LARGE SCALE GENOMIC DNA]</scope>
    <source>
        <strain>BCG / Pasteur 1173P2</strain>
    </source>
</reference>
<name>SSRP_MYCBP</name>
<feature type="chain" id="PRO_1000002084" description="SsrA-binding protein">
    <location>
        <begin position="1"/>
        <end position="160"/>
    </location>
</feature>
<proteinExistence type="inferred from homology"/>
<gene>
    <name evidence="1" type="primary">smpB</name>
    <name type="ordered locus">BCG_3125c</name>
</gene>
<protein>
    <recommendedName>
        <fullName evidence="1">SsrA-binding protein</fullName>
    </recommendedName>
    <alternativeName>
        <fullName evidence="1">Small protein B</fullName>
    </alternativeName>
</protein>